<accession>A1VDW9</accession>
<dbReference type="EC" id="1.2.1.70" evidence="1"/>
<dbReference type="EMBL" id="CP000527">
    <property type="protein sequence ID" value="ABM28635.1"/>
    <property type="molecule type" value="Genomic_DNA"/>
</dbReference>
<dbReference type="RefSeq" id="WP_011792377.1">
    <property type="nucleotide sequence ID" value="NC_008751.1"/>
</dbReference>
<dbReference type="SMR" id="A1VDW9"/>
<dbReference type="KEGG" id="dvl:Dvul_1618"/>
<dbReference type="HOGENOM" id="CLU_035113_2_2_7"/>
<dbReference type="UniPathway" id="UPA00251">
    <property type="reaction ID" value="UER00316"/>
</dbReference>
<dbReference type="Proteomes" id="UP000009173">
    <property type="component" value="Chromosome"/>
</dbReference>
<dbReference type="GO" id="GO:0008883">
    <property type="term" value="F:glutamyl-tRNA reductase activity"/>
    <property type="evidence" value="ECO:0007669"/>
    <property type="project" value="UniProtKB-UniRule"/>
</dbReference>
<dbReference type="GO" id="GO:0050661">
    <property type="term" value="F:NADP binding"/>
    <property type="evidence" value="ECO:0007669"/>
    <property type="project" value="InterPro"/>
</dbReference>
<dbReference type="GO" id="GO:0019353">
    <property type="term" value="P:protoporphyrinogen IX biosynthetic process from glutamate"/>
    <property type="evidence" value="ECO:0007669"/>
    <property type="project" value="TreeGrafter"/>
</dbReference>
<dbReference type="CDD" id="cd05213">
    <property type="entry name" value="NAD_bind_Glutamyl_tRNA_reduct"/>
    <property type="match status" value="1"/>
</dbReference>
<dbReference type="FunFam" id="3.30.460.30:FF:000001">
    <property type="entry name" value="Glutamyl-tRNA reductase"/>
    <property type="match status" value="1"/>
</dbReference>
<dbReference type="FunFam" id="3.40.50.720:FF:000031">
    <property type="entry name" value="Glutamyl-tRNA reductase"/>
    <property type="match status" value="1"/>
</dbReference>
<dbReference type="Gene3D" id="3.30.460.30">
    <property type="entry name" value="Glutamyl-tRNA reductase, N-terminal domain"/>
    <property type="match status" value="1"/>
</dbReference>
<dbReference type="Gene3D" id="3.40.50.720">
    <property type="entry name" value="NAD(P)-binding Rossmann-like Domain"/>
    <property type="match status" value="1"/>
</dbReference>
<dbReference type="HAMAP" id="MF_00087">
    <property type="entry name" value="Glu_tRNA_reductase"/>
    <property type="match status" value="1"/>
</dbReference>
<dbReference type="InterPro" id="IPR000343">
    <property type="entry name" value="4pyrrol_synth_GluRdtase"/>
</dbReference>
<dbReference type="InterPro" id="IPR015896">
    <property type="entry name" value="4pyrrol_synth_GluRdtase_dimer"/>
</dbReference>
<dbReference type="InterPro" id="IPR015895">
    <property type="entry name" value="4pyrrol_synth_GluRdtase_N"/>
</dbReference>
<dbReference type="InterPro" id="IPR018214">
    <property type="entry name" value="GluRdtase_CS"/>
</dbReference>
<dbReference type="InterPro" id="IPR036453">
    <property type="entry name" value="GluRdtase_dimer_dom_sf"/>
</dbReference>
<dbReference type="InterPro" id="IPR036343">
    <property type="entry name" value="GluRdtase_N_sf"/>
</dbReference>
<dbReference type="InterPro" id="IPR036291">
    <property type="entry name" value="NAD(P)-bd_dom_sf"/>
</dbReference>
<dbReference type="InterPro" id="IPR006151">
    <property type="entry name" value="Shikm_DH/Glu-tRNA_Rdtase"/>
</dbReference>
<dbReference type="NCBIfam" id="TIGR01035">
    <property type="entry name" value="hemA"/>
    <property type="match status" value="1"/>
</dbReference>
<dbReference type="PANTHER" id="PTHR43013">
    <property type="entry name" value="GLUTAMYL-TRNA REDUCTASE"/>
    <property type="match status" value="1"/>
</dbReference>
<dbReference type="PANTHER" id="PTHR43013:SF1">
    <property type="entry name" value="GLUTAMYL-TRNA REDUCTASE"/>
    <property type="match status" value="1"/>
</dbReference>
<dbReference type="Pfam" id="PF00745">
    <property type="entry name" value="GlutR_dimer"/>
    <property type="match status" value="1"/>
</dbReference>
<dbReference type="Pfam" id="PF05201">
    <property type="entry name" value="GlutR_N"/>
    <property type="match status" value="1"/>
</dbReference>
<dbReference type="Pfam" id="PF01488">
    <property type="entry name" value="Shikimate_DH"/>
    <property type="match status" value="1"/>
</dbReference>
<dbReference type="PIRSF" id="PIRSF000445">
    <property type="entry name" value="4pyrrol_synth_GluRdtase"/>
    <property type="match status" value="1"/>
</dbReference>
<dbReference type="SUPFAM" id="SSF69742">
    <property type="entry name" value="Glutamyl tRNA-reductase catalytic, N-terminal domain"/>
    <property type="match status" value="1"/>
</dbReference>
<dbReference type="SUPFAM" id="SSF69075">
    <property type="entry name" value="Glutamyl tRNA-reductase dimerization domain"/>
    <property type="match status" value="1"/>
</dbReference>
<dbReference type="SUPFAM" id="SSF51735">
    <property type="entry name" value="NAD(P)-binding Rossmann-fold domains"/>
    <property type="match status" value="1"/>
</dbReference>
<dbReference type="PROSITE" id="PS00747">
    <property type="entry name" value="GLUTR"/>
    <property type="match status" value="1"/>
</dbReference>
<reference key="1">
    <citation type="journal article" date="2009" name="Environ. Microbiol.">
        <title>Contribution of mobile genetic elements to Desulfovibrio vulgaris genome plasticity.</title>
        <authorList>
            <person name="Walker C.B."/>
            <person name="Stolyar S."/>
            <person name="Chivian D."/>
            <person name="Pinel N."/>
            <person name="Gabster J.A."/>
            <person name="Dehal P.S."/>
            <person name="He Z."/>
            <person name="Yang Z.K."/>
            <person name="Yen H.C."/>
            <person name="Zhou J."/>
            <person name="Wall J.D."/>
            <person name="Hazen T.C."/>
            <person name="Arkin A.P."/>
            <person name="Stahl D.A."/>
        </authorList>
    </citation>
    <scope>NUCLEOTIDE SEQUENCE [LARGE SCALE GENOMIC DNA]</scope>
    <source>
        <strain>DP4</strain>
    </source>
</reference>
<evidence type="ECO:0000255" key="1">
    <source>
        <dbReference type="HAMAP-Rule" id="MF_00087"/>
    </source>
</evidence>
<proteinExistence type="inferred from homology"/>
<sequence>MERDIYLIGLNHRTAGVEVRERFALTDCNVLEQGVVPIDDVVSEVLILSTCNRVEILAVGRGPEVVSRVLRGWAAARGQCEHDLAPYVYTHKGHEAVRHLFRVASSLDSMVVGEPQILGQLKDAYRKAIERNCTRVILNRLLHKAFSVAKRVRTETGVASSAVSISYAAVELAKRIFGEMNQYKAMLIGAGEMAELAATHLLHAGISKIYVANRTFERGRELARQFNGEAIHFEDLFERLADADIIISSTGAHEAIIRARDIKDVLRRRKHRPMFFIDIAVPRDIDPDVNNLDNVYLYDIDDLKEVVEENLAQRREEASKALTIVEEETGKFGQWLRSLELQPTIVDLIRRSERIAQDELARTLKRLGPVDDETRDALEAMLSSMVRKLNHEPITFLKRRHSEEDAGPRYIDIARRMFNLDDDNVPPDAHCDRRRHDEDN</sequence>
<feature type="chain" id="PRO_1000004618" description="Glutamyl-tRNA reductase">
    <location>
        <begin position="1"/>
        <end position="440"/>
    </location>
</feature>
<feature type="active site" description="Nucleophile" evidence="1">
    <location>
        <position position="51"/>
    </location>
</feature>
<feature type="binding site" evidence="1">
    <location>
        <begin position="50"/>
        <end position="53"/>
    </location>
    <ligand>
        <name>substrate</name>
    </ligand>
</feature>
<feature type="binding site" evidence="1">
    <location>
        <position position="109"/>
    </location>
    <ligand>
        <name>substrate</name>
    </ligand>
</feature>
<feature type="binding site" evidence="1">
    <location>
        <begin position="114"/>
        <end position="116"/>
    </location>
    <ligand>
        <name>substrate</name>
    </ligand>
</feature>
<feature type="binding site" evidence="1">
    <location>
        <position position="120"/>
    </location>
    <ligand>
        <name>substrate</name>
    </ligand>
</feature>
<feature type="binding site" evidence="1">
    <location>
        <begin position="189"/>
        <end position="194"/>
    </location>
    <ligand>
        <name>NADP(+)</name>
        <dbReference type="ChEBI" id="CHEBI:58349"/>
    </ligand>
</feature>
<feature type="site" description="Important for activity" evidence="1">
    <location>
        <position position="99"/>
    </location>
</feature>
<gene>
    <name evidence="1" type="primary">hemA</name>
    <name type="ordered locus">Dvul_1618</name>
</gene>
<comment type="function">
    <text evidence="1">Catalyzes the NADPH-dependent reduction of glutamyl-tRNA(Glu) to glutamate 1-semialdehyde (GSA).</text>
</comment>
<comment type="catalytic activity">
    <reaction evidence="1">
        <text>(S)-4-amino-5-oxopentanoate + tRNA(Glu) + NADP(+) = L-glutamyl-tRNA(Glu) + NADPH + H(+)</text>
        <dbReference type="Rhea" id="RHEA:12344"/>
        <dbReference type="Rhea" id="RHEA-COMP:9663"/>
        <dbReference type="Rhea" id="RHEA-COMP:9680"/>
        <dbReference type="ChEBI" id="CHEBI:15378"/>
        <dbReference type="ChEBI" id="CHEBI:57501"/>
        <dbReference type="ChEBI" id="CHEBI:57783"/>
        <dbReference type="ChEBI" id="CHEBI:58349"/>
        <dbReference type="ChEBI" id="CHEBI:78442"/>
        <dbReference type="ChEBI" id="CHEBI:78520"/>
        <dbReference type="EC" id="1.2.1.70"/>
    </reaction>
</comment>
<comment type="pathway">
    <text evidence="1">Porphyrin-containing compound metabolism; protoporphyrin-IX biosynthesis; 5-aminolevulinate from L-glutamyl-tRNA(Glu): step 1/2.</text>
</comment>
<comment type="subunit">
    <text evidence="1">Homodimer.</text>
</comment>
<comment type="domain">
    <text evidence="1">Possesses an unusual extended V-shaped dimeric structure with each monomer consisting of three distinct domains arranged along a curved 'spinal' alpha-helix. The N-terminal catalytic domain specifically recognizes the glutamate moiety of the substrate. The second domain is the NADPH-binding domain, and the third C-terminal domain is responsible for dimerization.</text>
</comment>
<comment type="miscellaneous">
    <text evidence="1">During catalysis, the active site Cys acts as a nucleophile attacking the alpha-carbonyl group of tRNA-bound glutamate with the formation of a thioester intermediate between enzyme and glutamate, and the concomitant release of tRNA(Glu). The thioester intermediate is finally reduced by direct hydride transfer from NADPH, to form the product GSA.</text>
</comment>
<comment type="similarity">
    <text evidence="1">Belongs to the glutamyl-tRNA reductase family.</text>
</comment>
<keyword id="KW-0521">NADP</keyword>
<keyword id="KW-0560">Oxidoreductase</keyword>
<keyword id="KW-0627">Porphyrin biosynthesis</keyword>
<name>HEM1_NITV4</name>
<protein>
    <recommendedName>
        <fullName evidence="1">Glutamyl-tRNA reductase</fullName>
        <shortName evidence="1">GluTR</shortName>
        <ecNumber evidence="1">1.2.1.70</ecNumber>
    </recommendedName>
</protein>
<organism>
    <name type="scientific">Nitratidesulfovibrio vulgaris (strain DP4)</name>
    <name type="common">Desulfovibrio vulgaris</name>
    <dbReference type="NCBI Taxonomy" id="391774"/>
    <lineage>
        <taxon>Bacteria</taxon>
        <taxon>Pseudomonadati</taxon>
        <taxon>Thermodesulfobacteriota</taxon>
        <taxon>Desulfovibrionia</taxon>
        <taxon>Desulfovibrionales</taxon>
        <taxon>Desulfovibrionaceae</taxon>
        <taxon>Nitratidesulfovibrio</taxon>
    </lineage>
</organism>